<reference key="1">
    <citation type="journal article" date="2008" name="J. Bacteriol.">
        <title>Genome sequence of the fish pathogen Renibacterium salmoninarum suggests reductive evolution away from an environmental Arthrobacter ancestor.</title>
        <authorList>
            <person name="Wiens G.D."/>
            <person name="Rockey D.D."/>
            <person name="Wu Z."/>
            <person name="Chang J."/>
            <person name="Levy R."/>
            <person name="Crane S."/>
            <person name="Chen D.S."/>
            <person name="Capri G.R."/>
            <person name="Burnett J.R."/>
            <person name="Sudheesh P.S."/>
            <person name="Schipma M.J."/>
            <person name="Burd H."/>
            <person name="Bhattacharyya A."/>
            <person name="Rhodes L.D."/>
            <person name="Kaul R."/>
            <person name="Strom M.S."/>
        </authorList>
    </citation>
    <scope>NUCLEOTIDE SEQUENCE [LARGE SCALE GENOMIC DNA]</scope>
    <source>
        <strain>ATCC 33209 / DSM 20767 / JCM 11484 / NBRC 15589 / NCIMB 2235</strain>
    </source>
</reference>
<accession>A9WML8</accession>
<keyword id="KW-0028">Amino-acid biosynthesis</keyword>
<keyword id="KW-0100">Branched-chain amino acid biosynthesis</keyword>
<keyword id="KW-0963">Cytoplasm</keyword>
<keyword id="KW-0432">Leucine biosynthesis</keyword>
<keyword id="KW-0460">Magnesium</keyword>
<keyword id="KW-0479">Metal-binding</keyword>
<keyword id="KW-1185">Reference proteome</keyword>
<keyword id="KW-0808">Transferase</keyword>
<comment type="function">
    <text evidence="1">Catalyzes the condensation of the acetyl group of acetyl-CoA with 3-methyl-2-oxobutanoate (2-ketoisovalerate) to form 3-carboxy-3-hydroxy-4-methylpentanoate (2-isopropylmalate).</text>
</comment>
<comment type="catalytic activity">
    <reaction evidence="1">
        <text>3-methyl-2-oxobutanoate + acetyl-CoA + H2O = (2S)-2-isopropylmalate + CoA + H(+)</text>
        <dbReference type="Rhea" id="RHEA:21524"/>
        <dbReference type="ChEBI" id="CHEBI:1178"/>
        <dbReference type="ChEBI" id="CHEBI:11851"/>
        <dbReference type="ChEBI" id="CHEBI:15377"/>
        <dbReference type="ChEBI" id="CHEBI:15378"/>
        <dbReference type="ChEBI" id="CHEBI:57287"/>
        <dbReference type="ChEBI" id="CHEBI:57288"/>
        <dbReference type="EC" id="2.3.3.13"/>
    </reaction>
</comment>
<comment type="cofactor">
    <cofactor evidence="1">
        <name>Mg(2+)</name>
        <dbReference type="ChEBI" id="CHEBI:18420"/>
    </cofactor>
</comment>
<comment type="pathway">
    <text evidence="1">Amino-acid biosynthesis; L-leucine biosynthesis; L-leucine from 3-methyl-2-oxobutanoate: step 1/4.</text>
</comment>
<comment type="subunit">
    <text evidence="1">Homodimer.</text>
</comment>
<comment type="subcellular location">
    <subcellularLocation>
        <location evidence="1">Cytoplasm</location>
    </subcellularLocation>
</comment>
<comment type="similarity">
    <text evidence="1">Belongs to the alpha-IPM synthase/homocitrate synthase family. LeuA type 2 subfamily.</text>
</comment>
<feature type="chain" id="PRO_1000129511" description="2-isopropylmalate synthase">
    <location>
        <begin position="1"/>
        <end position="582"/>
    </location>
</feature>
<feature type="domain" description="Pyruvate carboxyltransferase" evidence="1">
    <location>
        <begin position="40"/>
        <end position="314"/>
    </location>
</feature>
<feature type="region of interest" description="Regulatory domain" evidence="1">
    <location>
        <begin position="456"/>
        <end position="582"/>
    </location>
</feature>
<feature type="binding site" evidence="1">
    <location>
        <position position="49"/>
    </location>
    <ligand>
        <name>Mg(2+)</name>
        <dbReference type="ChEBI" id="CHEBI:18420"/>
    </ligand>
</feature>
<feature type="binding site" evidence="1">
    <location>
        <position position="253"/>
    </location>
    <ligand>
        <name>Mg(2+)</name>
        <dbReference type="ChEBI" id="CHEBI:18420"/>
    </ligand>
</feature>
<feature type="binding site" evidence="1">
    <location>
        <position position="255"/>
    </location>
    <ligand>
        <name>Mg(2+)</name>
        <dbReference type="ChEBI" id="CHEBI:18420"/>
    </ligand>
</feature>
<feature type="binding site" evidence="1">
    <location>
        <position position="289"/>
    </location>
    <ligand>
        <name>Mg(2+)</name>
        <dbReference type="ChEBI" id="CHEBI:18420"/>
    </ligand>
</feature>
<gene>
    <name evidence="1" type="primary">leuA</name>
    <name type="ordered locus">RSal33209_1593</name>
</gene>
<protein>
    <recommendedName>
        <fullName evidence="1">2-isopropylmalate synthase</fullName>
        <ecNumber evidence="1">2.3.3.13</ecNumber>
    </recommendedName>
    <alternativeName>
        <fullName evidence="1">Alpha-IPM synthase</fullName>
    </alternativeName>
    <alternativeName>
        <fullName evidence="1">Alpha-isopropylmalate synthase</fullName>
    </alternativeName>
</protein>
<name>LEU1_RENSM</name>
<organism>
    <name type="scientific">Renibacterium salmoninarum (strain ATCC 33209 / DSM 20767 / JCM 11484 / NBRC 15589 / NCIMB 2235)</name>
    <dbReference type="NCBI Taxonomy" id="288705"/>
    <lineage>
        <taxon>Bacteria</taxon>
        <taxon>Bacillati</taxon>
        <taxon>Actinomycetota</taxon>
        <taxon>Actinomycetes</taxon>
        <taxon>Micrococcales</taxon>
        <taxon>Micrococcaceae</taxon>
        <taxon>Renibacterium</taxon>
    </lineage>
</organism>
<evidence type="ECO:0000255" key="1">
    <source>
        <dbReference type="HAMAP-Rule" id="MF_00572"/>
    </source>
</evidence>
<dbReference type="EC" id="2.3.3.13" evidence="1"/>
<dbReference type="EMBL" id="CP000910">
    <property type="protein sequence ID" value="ABY23329.1"/>
    <property type="molecule type" value="Genomic_DNA"/>
</dbReference>
<dbReference type="RefSeq" id="WP_012245006.1">
    <property type="nucleotide sequence ID" value="NC_010168.1"/>
</dbReference>
<dbReference type="SMR" id="A9WML8"/>
<dbReference type="STRING" id="288705.RSal33209_1593"/>
<dbReference type="KEGG" id="rsa:RSal33209_1593"/>
<dbReference type="eggNOG" id="COG0119">
    <property type="taxonomic scope" value="Bacteria"/>
</dbReference>
<dbReference type="HOGENOM" id="CLU_004588_3_0_11"/>
<dbReference type="UniPathway" id="UPA00048">
    <property type="reaction ID" value="UER00070"/>
</dbReference>
<dbReference type="Proteomes" id="UP000002007">
    <property type="component" value="Chromosome"/>
</dbReference>
<dbReference type="GO" id="GO:0005737">
    <property type="term" value="C:cytoplasm"/>
    <property type="evidence" value="ECO:0007669"/>
    <property type="project" value="UniProtKB-SubCell"/>
</dbReference>
<dbReference type="GO" id="GO:0003852">
    <property type="term" value="F:2-isopropylmalate synthase activity"/>
    <property type="evidence" value="ECO:0007669"/>
    <property type="project" value="UniProtKB-UniRule"/>
</dbReference>
<dbReference type="GO" id="GO:0003985">
    <property type="term" value="F:acetyl-CoA C-acetyltransferase activity"/>
    <property type="evidence" value="ECO:0007669"/>
    <property type="project" value="UniProtKB-UniRule"/>
</dbReference>
<dbReference type="GO" id="GO:0000287">
    <property type="term" value="F:magnesium ion binding"/>
    <property type="evidence" value="ECO:0007669"/>
    <property type="project" value="UniProtKB-UniRule"/>
</dbReference>
<dbReference type="GO" id="GO:0009098">
    <property type="term" value="P:L-leucine biosynthetic process"/>
    <property type="evidence" value="ECO:0007669"/>
    <property type="project" value="UniProtKB-UniRule"/>
</dbReference>
<dbReference type="CDD" id="cd07942">
    <property type="entry name" value="DRE_TIM_LeuA"/>
    <property type="match status" value="1"/>
</dbReference>
<dbReference type="FunFam" id="3.30.160.270:FF:000006">
    <property type="entry name" value="2-isopropylmalate synthase"/>
    <property type="match status" value="1"/>
</dbReference>
<dbReference type="Gene3D" id="3.30.160.270">
    <property type="match status" value="1"/>
</dbReference>
<dbReference type="Gene3D" id="3.20.20.70">
    <property type="entry name" value="Aldolase class I"/>
    <property type="match status" value="1"/>
</dbReference>
<dbReference type="HAMAP" id="MF_00572">
    <property type="entry name" value="LeuA_type2"/>
    <property type="match status" value="1"/>
</dbReference>
<dbReference type="InterPro" id="IPR013709">
    <property type="entry name" value="2-isopropylmalate_synth_dimer"/>
</dbReference>
<dbReference type="InterPro" id="IPR002034">
    <property type="entry name" value="AIPM/Hcit_synth_CS"/>
</dbReference>
<dbReference type="InterPro" id="IPR013785">
    <property type="entry name" value="Aldolase_TIM"/>
</dbReference>
<dbReference type="InterPro" id="IPR005668">
    <property type="entry name" value="IPM_Synthase"/>
</dbReference>
<dbReference type="InterPro" id="IPR054692">
    <property type="entry name" value="LeuA-like_post-cat"/>
</dbReference>
<dbReference type="InterPro" id="IPR036230">
    <property type="entry name" value="LeuA_allosteric_dom_sf"/>
</dbReference>
<dbReference type="InterPro" id="IPR039371">
    <property type="entry name" value="LeuA_N_DRE-TIM"/>
</dbReference>
<dbReference type="InterPro" id="IPR000891">
    <property type="entry name" value="PYR_CT"/>
</dbReference>
<dbReference type="NCBIfam" id="TIGR00970">
    <property type="entry name" value="leuA_yeast"/>
    <property type="match status" value="1"/>
</dbReference>
<dbReference type="NCBIfam" id="NF002991">
    <property type="entry name" value="PRK03739.1"/>
    <property type="match status" value="1"/>
</dbReference>
<dbReference type="PANTHER" id="PTHR46911">
    <property type="match status" value="1"/>
</dbReference>
<dbReference type="PANTHER" id="PTHR46911:SF1">
    <property type="entry name" value="2-ISOPROPYLMALATE SYNTHASE"/>
    <property type="match status" value="1"/>
</dbReference>
<dbReference type="Pfam" id="PF00682">
    <property type="entry name" value="HMGL-like"/>
    <property type="match status" value="1"/>
</dbReference>
<dbReference type="Pfam" id="PF22615">
    <property type="entry name" value="IPMS_D2"/>
    <property type="match status" value="1"/>
</dbReference>
<dbReference type="Pfam" id="PF08502">
    <property type="entry name" value="LeuA_dimer"/>
    <property type="match status" value="1"/>
</dbReference>
<dbReference type="SMART" id="SM00917">
    <property type="entry name" value="LeuA_dimer"/>
    <property type="match status" value="1"/>
</dbReference>
<dbReference type="SUPFAM" id="SSF110921">
    <property type="entry name" value="2-isopropylmalate synthase LeuA, allosteric (dimerisation) domain"/>
    <property type="match status" value="1"/>
</dbReference>
<dbReference type="SUPFAM" id="SSF51569">
    <property type="entry name" value="Aldolase"/>
    <property type="match status" value="1"/>
</dbReference>
<dbReference type="SUPFAM" id="SSF89000">
    <property type="entry name" value="post-HMGL domain-like"/>
    <property type="match status" value="1"/>
</dbReference>
<dbReference type="PROSITE" id="PS00815">
    <property type="entry name" value="AIPM_HOMOCIT_SYNTH_1"/>
    <property type="match status" value="1"/>
</dbReference>
<dbReference type="PROSITE" id="PS00816">
    <property type="entry name" value="AIPM_HOMOCIT_SYNTH_2"/>
    <property type="match status" value="1"/>
</dbReference>
<dbReference type="PROSITE" id="PS50991">
    <property type="entry name" value="PYR_CT"/>
    <property type="match status" value="1"/>
</dbReference>
<sequence length="582" mass="63841">MRNAQKPSGMPVHRYLPFHEQIEVELPDRTWPTKRITTAPRWCAVDLRDGNQALIDPMSPARKLKMFELLVKMGYKEIEVGFPSASQTDFDFVRQLIQGGHIPEDVTIQVLTQAREHLIERTYESLVGAKQAIVHLYNSTSVLQRRVVFNEDQDGIMALATQGALLCKKYQETLTDTKITYEYSPESFTGTELDYAVRVCNAVADIFEASADNQVIVNLPATVEMITPNVYADSIEWMSHNLHPREGIILSLHPHNDRGTGVAAAELGYLAGADRIEGCLFGNGERAGNVDLVTLGLNMFSQGVDPMIDFSDIDEIRRTVEYCNQLPAPERMPYGGDLVFTAFSGSHQDAIKKGFEALERDADAAGIAVADTVWAVPYLPVDPKDLGRSYEAVIRVNSQSGKGGVAYLLKSEHSLDLPRRAQIEFSGVIQRRTDSVGGEVSADQRWEAFTDEYLPSPAGHPGGQWGRYALGSMNADTEEDGTTKLNTAMRIDGVEQRRSGSGNGPIAALLNILHDDGVDVRVLDYSEHALSEGGNASAASYVECAVGDRVLWGLGIDPNTTVSSLKAVISAVNRAIRDNQVD</sequence>
<proteinExistence type="inferred from homology"/>